<keyword id="KW-0328">Glycosyltransferase</keyword>
<keyword id="KW-1185">Reference proteome</keyword>
<keyword id="KW-0808">Transferase</keyword>
<reference key="1">
    <citation type="journal article" date="2002" name="Nat. Biotechnol.">
        <title>Genome sequence of the dissimilatory metal ion-reducing bacterium Shewanella oneidensis.</title>
        <authorList>
            <person name="Heidelberg J.F."/>
            <person name="Paulsen I.T."/>
            <person name="Nelson K.E."/>
            <person name="Gaidos E.J."/>
            <person name="Nelson W.C."/>
            <person name="Read T.D."/>
            <person name="Eisen J.A."/>
            <person name="Seshadri R."/>
            <person name="Ward N.L."/>
            <person name="Methe B.A."/>
            <person name="Clayton R.A."/>
            <person name="Meyer T."/>
            <person name="Tsapin A."/>
            <person name="Scott J."/>
            <person name="Beanan M.J."/>
            <person name="Brinkac L.M."/>
            <person name="Daugherty S.C."/>
            <person name="DeBoy R.T."/>
            <person name="Dodson R.J."/>
            <person name="Durkin A.S."/>
            <person name="Haft D.H."/>
            <person name="Kolonay J.F."/>
            <person name="Madupu R."/>
            <person name="Peterson J.D."/>
            <person name="Umayam L.A."/>
            <person name="White O."/>
            <person name="Wolf A.M."/>
            <person name="Vamathevan J.J."/>
            <person name="Weidman J.F."/>
            <person name="Impraim M."/>
            <person name="Lee K."/>
            <person name="Berry K.J."/>
            <person name="Lee C."/>
            <person name="Mueller J."/>
            <person name="Khouri H.M."/>
            <person name="Gill J."/>
            <person name="Utterback T.R."/>
            <person name="McDonald L.A."/>
            <person name="Feldblyum T.V."/>
            <person name="Smith H.O."/>
            <person name="Venter J.C."/>
            <person name="Nealson K.H."/>
            <person name="Fraser C.M."/>
        </authorList>
    </citation>
    <scope>NUCLEOTIDE SEQUENCE [LARGE SCALE GENOMIC DNA]</scope>
    <source>
        <strain>ATCC 700550 / JCM 31522 / CIP 106686 / LMG 19005 / NCIMB 14063 / MR-1</strain>
    </source>
</reference>
<name>TYPH_SHEON</name>
<feature type="chain" id="PRO_0000059065" description="Thymidine phosphorylase">
    <location>
        <begin position="1"/>
        <end position="443"/>
    </location>
</feature>
<comment type="function">
    <text evidence="1">The enzymes which catalyze the reversible phosphorolysis of pyrimidine nucleosides are involved in the degradation of these compounds and in their utilization as carbon and energy sources, or in the rescue of pyrimidine bases for nucleotide synthesis.</text>
</comment>
<comment type="catalytic activity">
    <reaction evidence="1">
        <text>thymidine + phosphate = 2-deoxy-alpha-D-ribose 1-phosphate + thymine</text>
        <dbReference type="Rhea" id="RHEA:16037"/>
        <dbReference type="ChEBI" id="CHEBI:17748"/>
        <dbReference type="ChEBI" id="CHEBI:17821"/>
        <dbReference type="ChEBI" id="CHEBI:43474"/>
        <dbReference type="ChEBI" id="CHEBI:57259"/>
        <dbReference type="EC" id="2.4.2.4"/>
    </reaction>
</comment>
<comment type="pathway">
    <text evidence="1">Pyrimidine metabolism; dTMP biosynthesis via salvage pathway; dTMP from thymine: step 1/2.</text>
</comment>
<comment type="subunit">
    <text evidence="1">Homodimer.</text>
</comment>
<comment type="similarity">
    <text evidence="1">Belongs to the thymidine/pyrimidine-nucleoside phosphorylase family.</text>
</comment>
<gene>
    <name evidence="1" type="primary">deoA</name>
    <name type="ordered locus">SO_1218</name>
</gene>
<sequence length="443" mass="47016">MFLAQEIIRKKRNGLVLSAEEIQFFVKGITTNAVSEGQIAALGMAVYFNDMNMDERIALTTAMRDSGTVLNWQSLNLNGPVIDKHSTGGVGDVISLMLGPMAAACGGYVPMISGRGLGHTGGTLDKFDAIPGYQTEPSSELFRKVVKDVGVAIIGQTGDLVPADKRFYSIRDNTATVESISLITASILSKKLACSLDALAMDVKVGSGAFMPTYEASEELARSIAAVANGAGTKTTALLTDMNQVLASCAGNALEVKEAIDFLTGAYRNPRLYAVTMGLCAEMLLLGGLATDEADARAKLNRVLDNGRAAEIFGKMVSGLGGPVDFVENYSKYLPQSQIIRPVFADTQGYAHSMDTRELGLAVVTLGGGRRKPGDELDYSVGLTQVCALGDKIDASTPIAVIHAQSEEAFAQAEDAVKKAIHIDEIAPEKTPEIYAYIRATDL</sequence>
<protein>
    <recommendedName>
        <fullName evidence="1">Thymidine phosphorylase</fullName>
        <ecNumber evidence="1">2.4.2.4</ecNumber>
    </recommendedName>
    <alternativeName>
        <fullName evidence="1">TdRPase</fullName>
    </alternativeName>
</protein>
<proteinExistence type="inferred from homology"/>
<accession>Q8EHK3</accession>
<dbReference type="EC" id="2.4.2.4" evidence="1"/>
<dbReference type="EMBL" id="AE014299">
    <property type="protein sequence ID" value="AAN54286.1"/>
    <property type="molecule type" value="Genomic_DNA"/>
</dbReference>
<dbReference type="RefSeq" id="NP_716841.1">
    <property type="nucleotide sequence ID" value="NC_004347.2"/>
</dbReference>
<dbReference type="RefSeq" id="WP_011071447.1">
    <property type="nucleotide sequence ID" value="NC_004347.2"/>
</dbReference>
<dbReference type="SMR" id="Q8EHK3"/>
<dbReference type="STRING" id="211586.SO_1218"/>
<dbReference type="PaxDb" id="211586-SO_1218"/>
<dbReference type="KEGG" id="son:SO_1218"/>
<dbReference type="PATRIC" id="fig|211586.12.peg.1170"/>
<dbReference type="eggNOG" id="COG0213">
    <property type="taxonomic scope" value="Bacteria"/>
</dbReference>
<dbReference type="HOGENOM" id="CLU_025040_0_1_6"/>
<dbReference type="OrthoDB" id="9763887at2"/>
<dbReference type="PhylomeDB" id="Q8EHK3"/>
<dbReference type="BioCyc" id="SONE211586:G1GMP-1129-MONOMER"/>
<dbReference type="UniPathway" id="UPA00578">
    <property type="reaction ID" value="UER00638"/>
</dbReference>
<dbReference type="Proteomes" id="UP000008186">
    <property type="component" value="Chromosome"/>
</dbReference>
<dbReference type="GO" id="GO:0005829">
    <property type="term" value="C:cytosol"/>
    <property type="evidence" value="ECO:0000318"/>
    <property type="project" value="GO_Central"/>
</dbReference>
<dbReference type="GO" id="GO:0004645">
    <property type="term" value="F:1,4-alpha-oligoglucan phosphorylase activity"/>
    <property type="evidence" value="ECO:0007669"/>
    <property type="project" value="InterPro"/>
</dbReference>
<dbReference type="GO" id="GO:0009032">
    <property type="term" value="F:thymidine phosphorylase activity"/>
    <property type="evidence" value="ECO:0000318"/>
    <property type="project" value="GO_Central"/>
</dbReference>
<dbReference type="GO" id="GO:0006206">
    <property type="term" value="P:pyrimidine nucleobase metabolic process"/>
    <property type="evidence" value="ECO:0007669"/>
    <property type="project" value="InterPro"/>
</dbReference>
<dbReference type="GO" id="GO:0046104">
    <property type="term" value="P:thymidine metabolic process"/>
    <property type="evidence" value="ECO:0007669"/>
    <property type="project" value="UniProtKB-UniRule"/>
</dbReference>
<dbReference type="FunFam" id="3.40.1030.10:FF:000001">
    <property type="entry name" value="Thymidine phosphorylase"/>
    <property type="match status" value="1"/>
</dbReference>
<dbReference type="FunFam" id="3.90.1170.30:FF:000001">
    <property type="entry name" value="Thymidine phosphorylase"/>
    <property type="match status" value="1"/>
</dbReference>
<dbReference type="Gene3D" id="3.40.1030.10">
    <property type="entry name" value="Nucleoside phosphorylase/phosphoribosyltransferase catalytic domain"/>
    <property type="match status" value="1"/>
</dbReference>
<dbReference type="Gene3D" id="3.90.1170.30">
    <property type="entry name" value="Pyrimidine nucleoside phosphorylase-like, C-terminal domain"/>
    <property type="match status" value="1"/>
</dbReference>
<dbReference type="Gene3D" id="1.20.970.10">
    <property type="entry name" value="Transferase, Pyrimidine Nucleoside Phosphorylase, Chain C"/>
    <property type="match status" value="1"/>
</dbReference>
<dbReference type="HAMAP" id="MF_01628">
    <property type="entry name" value="Thymid_phosp"/>
    <property type="match status" value="1"/>
</dbReference>
<dbReference type="InterPro" id="IPR000312">
    <property type="entry name" value="Glycosyl_Trfase_fam3"/>
</dbReference>
<dbReference type="InterPro" id="IPR017459">
    <property type="entry name" value="Glycosyl_Trfase_fam3_N_dom"/>
</dbReference>
<dbReference type="InterPro" id="IPR036320">
    <property type="entry name" value="Glycosyl_Trfase_fam3_N_dom_sf"/>
</dbReference>
<dbReference type="InterPro" id="IPR035902">
    <property type="entry name" value="Nuc_phospho_transferase"/>
</dbReference>
<dbReference type="InterPro" id="IPR036566">
    <property type="entry name" value="PYNP-like_C_sf"/>
</dbReference>
<dbReference type="InterPro" id="IPR013102">
    <property type="entry name" value="PYNP_C"/>
</dbReference>
<dbReference type="InterPro" id="IPR018090">
    <property type="entry name" value="Pyrmidine_PPas_bac/euk"/>
</dbReference>
<dbReference type="InterPro" id="IPR017872">
    <property type="entry name" value="Pyrmidine_PPase_CS"/>
</dbReference>
<dbReference type="InterPro" id="IPR000053">
    <property type="entry name" value="Thymidine/pyrmidine_PPase"/>
</dbReference>
<dbReference type="InterPro" id="IPR013465">
    <property type="entry name" value="Thymidine_Pase"/>
</dbReference>
<dbReference type="NCBIfam" id="NF004490">
    <property type="entry name" value="PRK05820.1"/>
    <property type="match status" value="1"/>
</dbReference>
<dbReference type="NCBIfam" id="TIGR02643">
    <property type="entry name" value="T_phosphoryl"/>
    <property type="match status" value="1"/>
</dbReference>
<dbReference type="NCBIfam" id="TIGR02644">
    <property type="entry name" value="Y_phosphoryl"/>
    <property type="match status" value="1"/>
</dbReference>
<dbReference type="PANTHER" id="PTHR10515">
    <property type="entry name" value="THYMIDINE PHOSPHORYLASE"/>
    <property type="match status" value="1"/>
</dbReference>
<dbReference type="PANTHER" id="PTHR10515:SF0">
    <property type="entry name" value="THYMIDINE PHOSPHORYLASE"/>
    <property type="match status" value="1"/>
</dbReference>
<dbReference type="Pfam" id="PF02885">
    <property type="entry name" value="Glycos_trans_3N"/>
    <property type="match status" value="1"/>
</dbReference>
<dbReference type="Pfam" id="PF00591">
    <property type="entry name" value="Glycos_transf_3"/>
    <property type="match status" value="1"/>
</dbReference>
<dbReference type="Pfam" id="PF07831">
    <property type="entry name" value="PYNP_C"/>
    <property type="match status" value="1"/>
</dbReference>
<dbReference type="PIRSF" id="PIRSF000478">
    <property type="entry name" value="TP_PyNP"/>
    <property type="match status" value="1"/>
</dbReference>
<dbReference type="SMART" id="SM00941">
    <property type="entry name" value="PYNP_C"/>
    <property type="match status" value="1"/>
</dbReference>
<dbReference type="SUPFAM" id="SSF52418">
    <property type="entry name" value="Nucleoside phosphorylase/phosphoribosyltransferase catalytic domain"/>
    <property type="match status" value="1"/>
</dbReference>
<dbReference type="SUPFAM" id="SSF47648">
    <property type="entry name" value="Nucleoside phosphorylase/phosphoribosyltransferase N-terminal domain"/>
    <property type="match status" value="1"/>
</dbReference>
<dbReference type="SUPFAM" id="SSF54680">
    <property type="entry name" value="Pyrimidine nucleoside phosphorylase C-terminal domain"/>
    <property type="match status" value="1"/>
</dbReference>
<dbReference type="PROSITE" id="PS00647">
    <property type="entry name" value="THYMID_PHOSPHORYLASE"/>
    <property type="match status" value="1"/>
</dbReference>
<organism>
    <name type="scientific">Shewanella oneidensis (strain ATCC 700550 / JCM 31522 / CIP 106686 / LMG 19005 / NCIMB 14063 / MR-1)</name>
    <dbReference type="NCBI Taxonomy" id="211586"/>
    <lineage>
        <taxon>Bacteria</taxon>
        <taxon>Pseudomonadati</taxon>
        <taxon>Pseudomonadota</taxon>
        <taxon>Gammaproteobacteria</taxon>
        <taxon>Alteromonadales</taxon>
        <taxon>Shewanellaceae</taxon>
        <taxon>Shewanella</taxon>
    </lineage>
</organism>
<evidence type="ECO:0000255" key="1">
    <source>
        <dbReference type="HAMAP-Rule" id="MF_01628"/>
    </source>
</evidence>